<gene>
    <name evidence="1" type="primary">frr</name>
    <name type="ordered locus">RHA1_ro06581</name>
</gene>
<protein>
    <recommendedName>
        <fullName evidence="1">Ribosome-recycling factor</fullName>
        <shortName evidence="1">RRF</shortName>
    </recommendedName>
    <alternativeName>
        <fullName evidence="1">Ribosome-releasing factor</fullName>
    </alternativeName>
</protein>
<reference key="1">
    <citation type="journal article" date="2006" name="Proc. Natl. Acad. Sci. U.S.A.">
        <title>The complete genome of Rhodococcus sp. RHA1 provides insights into a catabolic powerhouse.</title>
        <authorList>
            <person name="McLeod M.P."/>
            <person name="Warren R.L."/>
            <person name="Hsiao W.W.L."/>
            <person name="Araki N."/>
            <person name="Myhre M."/>
            <person name="Fernandes C."/>
            <person name="Miyazawa D."/>
            <person name="Wong W."/>
            <person name="Lillquist A.L."/>
            <person name="Wang D."/>
            <person name="Dosanjh M."/>
            <person name="Hara H."/>
            <person name="Petrescu A."/>
            <person name="Morin R.D."/>
            <person name="Yang G."/>
            <person name="Stott J.M."/>
            <person name="Schein J.E."/>
            <person name="Shin H."/>
            <person name="Smailus D."/>
            <person name="Siddiqui A.S."/>
            <person name="Marra M.A."/>
            <person name="Jones S.J.M."/>
            <person name="Holt R."/>
            <person name="Brinkman F.S.L."/>
            <person name="Miyauchi K."/>
            <person name="Fukuda M."/>
            <person name="Davies J.E."/>
            <person name="Mohn W.W."/>
            <person name="Eltis L.D."/>
        </authorList>
    </citation>
    <scope>NUCLEOTIDE SEQUENCE [LARGE SCALE GENOMIC DNA]</scope>
    <source>
        <strain>RHA1</strain>
    </source>
</reference>
<sequence length="185" mass="20539">MIDEALFEAEEKMEKAVTVAKDDLGSIRTGRANPGMFNRIGIDYYGAFTPITQLASINVPEARLVVVKPYEASQLGAIETAIRNSDLGVNPSNDGNLIRISVPQLTEERRRELVKQAKSKGEDAKVSVRNVRRKAMDELSRIQKDGEAGEDEVGRAEKELDKTTARYVAQVDELVKHKEAELLEV</sequence>
<accession>Q0S282</accession>
<evidence type="ECO:0000255" key="1">
    <source>
        <dbReference type="HAMAP-Rule" id="MF_00040"/>
    </source>
</evidence>
<evidence type="ECO:0000256" key="2">
    <source>
        <dbReference type="SAM" id="MobiDB-lite"/>
    </source>
</evidence>
<keyword id="KW-0963">Cytoplasm</keyword>
<keyword id="KW-0648">Protein biosynthesis</keyword>
<comment type="function">
    <text evidence="1">Responsible for the release of ribosomes from messenger RNA at the termination of protein biosynthesis. May increase the efficiency of translation by recycling ribosomes from one round of translation to another.</text>
</comment>
<comment type="subcellular location">
    <subcellularLocation>
        <location evidence="1">Cytoplasm</location>
    </subcellularLocation>
</comment>
<comment type="similarity">
    <text evidence="1">Belongs to the RRF family.</text>
</comment>
<feature type="chain" id="PRO_1000003246" description="Ribosome-recycling factor">
    <location>
        <begin position="1"/>
        <end position="185"/>
    </location>
</feature>
<feature type="region of interest" description="Disordered" evidence="2">
    <location>
        <begin position="141"/>
        <end position="160"/>
    </location>
</feature>
<dbReference type="EMBL" id="CP000431">
    <property type="protein sequence ID" value="ABG98354.1"/>
    <property type="molecule type" value="Genomic_DNA"/>
</dbReference>
<dbReference type="RefSeq" id="WP_005240537.1">
    <property type="nucleotide sequence ID" value="NC_008268.1"/>
</dbReference>
<dbReference type="SMR" id="Q0S282"/>
<dbReference type="GeneID" id="69890955"/>
<dbReference type="KEGG" id="rha:RHA1_ro06581"/>
<dbReference type="eggNOG" id="COG0233">
    <property type="taxonomic scope" value="Bacteria"/>
</dbReference>
<dbReference type="HOGENOM" id="CLU_073981_2_0_11"/>
<dbReference type="OrthoDB" id="9804006at2"/>
<dbReference type="Proteomes" id="UP000008710">
    <property type="component" value="Chromosome"/>
</dbReference>
<dbReference type="GO" id="GO:0005737">
    <property type="term" value="C:cytoplasm"/>
    <property type="evidence" value="ECO:0007669"/>
    <property type="project" value="UniProtKB-SubCell"/>
</dbReference>
<dbReference type="GO" id="GO:0043023">
    <property type="term" value="F:ribosomal large subunit binding"/>
    <property type="evidence" value="ECO:0007669"/>
    <property type="project" value="TreeGrafter"/>
</dbReference>
<dbReference type="GO" id="GO:0006415">
    <property type="term" value="P:translational termination"/>
    <property type="evidence" value="ECO:0007669"/>
    <property type="project" value="UniProtKB-UniRule"/>
</dbReference>
<dbReference type="CDD" id="cd00520">
    <property type="entry name" value="RRF"/>
    <property type="match status" value="1"/>
</dbReference>
<dbReference type="FunFam" id="1.10.132.20:FF:000001">
    <property type="entry name" value="Ribosome-recycling factor"/>
    <property type="match status" value="1"/>
</dbReference>
<dbReference type="FunFam" id="3.30.1360.40:FF:000001">
    <property type="entry name" value="Ribosome-recycling factor"/>
    <property type="match status" value="1"/>
</dbReference>
<dbReference type="Gene3D" id="3.30.1360.40">
    <property type="match status" value="1"/>
</dbReference>
<dbReference type="Gene3D" id="1.10.132.20">
    <property type="entry name" value="Ribosome-recycling factor"/>
    <property type="match status" value="1"/>
</dbReference>
<dbReference type="HAMAP" id="MF_00040">
    <property type="entry name" value="RRF"/>
    <property type="match status" value="1"/>
</dbReference>
<dbReference type="InterPro" id="IPR002661">
    <property type="entry name" value="Ribosome_recyc_fac"/>
</dbReference>
<dbReference type="InterPro" id="IPR023584">
    <property type="entry name" value="Ribosome_recyc_fac_dom"/>
</dbReference>
<dbReference type="InterPro" id="IPR036191">
    <property type="entry name" value="RRF_sf"/>
</dbReference>
<dbReference type="NCBIfam" id="TIGR00496">
    <property type="entry name" value="frr"/>
    <property type="match status" value="1"/>
</dbReference>
<dbReference type="PANTHER" id="PTHR20982:SF3">
    <property type="entry name" value="MITOCHONDRIAL RIBOSOME RECYCLING FACTOR PSEUDO 1"/>
    <property type="match status" value="1"/>
</dbReference>
<dbReference type="PANTHER" id="PTHR20982">
    <property type="entry name" value="RIBOSOME RECYCLING FACTOR"/>
    <property type="match status" value="1"/>
</dbReference>
<dbReference type="Pfam" id="PF01765">
    <property type="entry name" value="RRF"/>
    <property type="match status" value="1"/>
</dbReference>
<dbReference type="SUPFAM" id="SSF55194">
    <property type="entry name" value="Ribosome recycling factor, RRF"/>
    <property type="match status" value="1"/>
</dbReference>
<name>RRF_RHOJR</name>
<organism>
    <name type="scientific">Rhodococcus jostii (strain RHA1)</name>
    <dbReference type="NCBI Taxonomy" id="101510"/>
    <lineage>
        <taxon>Bacteria</taxon>
        <taxon>Bacillati</taxon>
        <taxon>Actinomycetota</taxon>
        <taxon>Actinomycetes</taxon>
        <taxon>Mycobacteriales</taxon>
        <taxon>Nocardiaceae</taxon>
        <taxon>Rhodococcus</taxon>
    </lineage>
</organism>
<proteinExistence type="inferred from homology"/>